<sequence>MKVKLITVGKLKEKYLKDGIAEYCKRLKRFTKFELEELPDEKIPNNASQAQNTYILEKEGQRILNKISNREFVIVLAIEGKQFSSEKFSQLLSATMLKGYSDLTFVIGGSLGLSQEVKKRASILMSFGLLTLPHQLMRLVFVEQIYRAFMIQEGSPYHK</sequence>
<organism>
    <name type="scientific">Streptococcus mutans serotype c (strain ATCC 700610 / UA159)</name>
    <dbReference type="NCBI Taxonomy" id="210007"/>
    <lineage>
        <taxon>Bacteria</taxon>
        <taxon>Bacillati</taxon>
        <taxon>Bacillota</taxon>
        <taxon>Bacilli</taxon>
        <taxon>Lactobacillales</taxon>
        <taxon>Streptococcaceae</taxon>
        <taxon>Streptococcus</taxon>
    </lineage>
</organism>
<feature type="chain" id="PRO_0000198189" description="Ribosomal RNA large subunit methyltransferase H">
    <location>
        <begin position="1"/>
        <end position="159"/>
    </location>
</feature>
<feature type="binding site" evidence="1">
    <location>
        <position position="76"/>
    </location>
    <ligand>
        <name>S-adenosyl-L-methionine</name>
        <dbReference type="ChEBI" id="CHEBI:59789"/>
    </ligand>
</feature>
<feature type="binding site" evidence="1">
    <location>
        <position position="108"/>
    </location>
    <ligand>
        <name>S-adenosyl-L-methionine</name>
        <dbReference type="ChEBI" id="CHEBI:59789"/>
    </ligand>
</feature>
<feature type="binding site" evidence="1">
    <location>
        <begin position="127"/>
        <end position="132"/>
    </location>
    <ligand>
        <name>S-adenosyl-L-methionine</name>
        <dbReference type="ChEBI" id="CHEBI:59789"/>
    </ligand>
</feature>
<keyword id="KW-0963">Cytoplasm</keyword>
<keyword id="KW-0489">Methyltransferase</keyword>
<keyword id="KW-1185">Reference proteome</keyword>
<keyword id="KW-0698">rRNA processing</keyword>
<keyword id="KW-0949">S-adenosyl-L-methionine</keyword>
<keyword id="KW-0808">Transferase</keyword>
<gene>
    <name evidence="1" type="primary">rlmH</name>
    <name type="ordered locus">SMU_2162c</name>
</gene>
<dbReference type="EC" id="2.1.1.177" evidence="1"/>
<dbReference type="EMBL" id="AE014133">
    <property type="protein sequence ID" value="AAN59751.1"/>
    <property type="molecule type" value="Genomic_DNA"/>
</dbReference>
<dbReference type="RefSeq" id="NP_722445.1">
    <property type="nucleotide sequence ID" value="NC_004350.2"/>
</dbReference>
<dbReference type="RefSeq" id="WP_002262651.1">
    <property type="nucleotide sequence ID" value="NC_004350.2"/>
</dbReference>
<dbReference type="SMR" id="Q8DRQ7"/>
<dbReference type="STRING" id="210007.SMU_2162c"/>
<dbReference type="GeneID" id="93860370"/>
<dbReference type="KEGG" id="smu:SMU_2162c"/>
<dbReference type="PATRIC" id="fig|210007.7.peg.1924"/>
<dbReference type="eggNOG" id="COG1576">
    <property type="taxonomic scope" value="Bacteria"/>
</dbReference>
<dbReference type="HOGENOM" id="CLU_100552_0_0_9"/>
<dbReference type="OrthoDB" id="9806643at2"/>
<dbReference type="PhylomeDB" id="Q8DRQ7"/>
<dbReference type="Proteomes" id="UP000002512">
    <property type="component" value="Chromosome"/>
</dbReference>
<dbReference type="GO" id="GO:0005737">
    <property type="term" value="C:cytoplasm"/>
    <property type="evidence" value="ECO:0007669"/>
    <property type="project" value="UniProtKB-SubCell"/>
</dbReference>
<dbReference type="GO" id="GO:0070038">
    <property type="term" value="F:rRNA (pseudouridine-N3-)-methyltransferase activity"/>
    <property type="evidence" value="ECO:0007669"/>
    <property type="project" value="UniProtKB-UniRule"/>
</dbReference>
<dbReference type="CDD" id="cd18081">
    <property type="entry name" value="RlmH-like"/>
    <property type="match status" value="1"/>
</dbReference>
<dbReference type="Gene3D" id="3.40.1280.10">
    <property type="match status" value="1"/>
</dbReference>
<dbReference type="HAMAP" id="MF_00658">
    <property type="entry name" value="23SrRNA_methyltr_H"/>
    <property type="match status" value="1"/>
</dbReference>
<dbReference type="InterPro" id="IPR029028">
    <property type="entry name" value="Alpha/beta_knot_MTases"/>
</dbReference>
<dbReference type="InterPro" id="IPR003742">
    <property type="entry name" value="RlmH-like"/>
</dbReference>
<dbReference type="InterPro" id="IPR029026">
    <property type="entry name" value="tRNA_m1G_MTases_N"/>
</dbReference>
<dbReference type="NCBIfam" id="NF000985">
    <property type="entry name" value="PRK00103.1-3"/>
    <property type="match status" value="1"/>
</dbReference>
<dbReference type="NCBIfam" id="TIGR00246">
    <property type="entry name" value="tRNA_RlmH_YbeA"/>
    <property type="match status" value="1"/>
</dbReference>
<dbReference type="PANTHER" id="PTHR33603">
    <property type="entry name" value="METHYLTRANSFERASE"/>
    <property type="match status" value="1"/>
</dbReference>
<dbReference type="PANTHER" id="PTHR33603:SF1">
    <property type="entry name" value="RIBOSOMAL RNA LARGE SUBUNIT METHYLTRANSFERASE H"/>
    <property type="match status" value="1"/>
</dbReference>
<dbReference type="Pfam" id="PF02590">
    <property type="entry name" value="SPOUT_MTase"/>
    <property type="match status" value="1"/>
</dbReference>
<dbReference type="PIRSF" id="PIRSF004505">
    <property type="entry name" value="MT_bac"/>
    <property type="match status" value="1"/>
</dbReference>
<dbReference type="SUPFAM" id="SSF75217">
    <property type="entry name" value="alpha/beta knot"/>
    <property type="match status" value="1"/>
</dbReference>
<reference key="1">
    <citation type="journal article" date="2002" name="Proc. Natl. Acad. Sci. U.S.A.">
        <title>Genome sequence of Streptococcus mutans UA159, a cariogenic dental pathogen.</title>
        <authorList>
            <person name="Ajdic D.J."/>
            <person name="McShan W.M."/>
            <person name="McLaughlin R.E."/>
            <person name="Savic G."/>
            <person name="Chang J."/>
            <person name="Carson M.B."/>
            <person name="Primeaux C."/>
            <person name="Tian R."/>
            <person name="Kenton S."/>
            <person name="Jia H.G."/>
            <person name="Lin S.P."/>
            <person name="Qian Y."/>
            <person name="Li S."/>
            <person name="Zhu H."/>
            <person name="Najar F.Z."/>
            <person name="Lai H."/>
            <person name="White J."/>
            <person name="Roe B.A."/>
            <person name="Ferretti J.J."/>
        </authorList>
    </citation>
    <scope>NUCLEOTIDE SEQUENCE [LARGE SCALE GENOMIC DNA]</scope>
    <source>
        <strain>ATCC 700610 / UA159</strain>
    </source>
</reference>
<evidence type="ECO:0000255" key="1">
    <source>
        <dbReference type="HAMAP-Rule" id="MF_00658"/>
    </source>
</evidence>
<name>RLMH_STRMU</name>
<protein>
    <recommendedName>
        <fullName evidence="1">Ribosomal RNA large subunit methyltransferase H</fullName>
        <ecNumber evidence="1">2.1.1.177</ecNumber>
    </recommendedName>
    <alternativeName>
        <fullName evidence="1">23S rRNA (pseudouridine1915-N3)-methyltransferase</fullName>
    </alternativeName>
    <alternativeName>
        <fullName evidence="1">23S rRNA m3Psi1915 methyltransferase</fullName>
    </alternativeName>
    <alternativeName>
        <fullName evidence="1">rRNA (pseudouridine-N3-)-methyltransferase RlmH</fullName>
    </alternativeName>
</protein>
<accession>Q8DRQ7</accession>
<proteinExistence type="inferred from homology"/>
<comment type="function">
    <text evidence="1">Specifically methylates the pseudouridine at position 1915 (m3Psi1915) in 23S rRNA.</text>
</comment>
<comment type="catalytic activity">
    <reaction evidence="1">
        <text>pseudouridine(1915) in 23S rRNA + S-adenosyl-L-methionine = N(3)-methylpseudouridine(1915) in 23S rRNA + S-adenosyl-L-homocysteine + H(+)</text>
        <dbReference type="Rhea" id="RHEA:42752"/>
        <dbReference type="Rhea" id="RHEA-COMP:10221"/>
        <dbReference type="Rhea" id="RHEA-COMP:10222"/>
        <dbReference type="ChEBI" id="CHEBI:15378"/>
        <dbReference type="ChEBI" id="CHEBI:57856"/>
        <dbReference type="ChEBI" id="CHEBI:59789"/>
        <dbReference type="ChEBI" id="CHEBI:65314"/>
        <dbReference type="ChEBI" id="CHEBI:74486"/>
        <dbReference type="EC" id="2.1.1.177"/>
    </reaction>
</comment>
<comment type="subunit">
    <text evidence="1">Homodimer.</text>
</comment>
<comment type="subcellular location">
    <subcellularLocation>
        <location evidence="1">Cytoplasm</location>
    </subcellularLocation>
</comment>
<comment type="similarity">
    <text evidence="1">Belongs to the RNA methyltransferase RlmH family.</text>
</comment>